<sequence length="112" mass="13125">MPDGWRKMGVLVFYDLPVVSPEQRLAAVRFHKFLLADGFERMHYSIYARYCGSMERAATYERRVEQALPAVGHVNLLKLTDRQMVGMRKWIRGNYRAPENAEFVPPAQYQLF</sequence>
<keyword id="KW-0051">Antiviral defense</keyword>
<keyword id="KW-0255">Endonuclease</keyword>
<keyword id="KW-0378">Hydrolase</keyword>
<keyword id="KW-0460">Magnesium</keyword>
<keyword id="KW-0479">Metal-binding</keyword>
<keyword id="KW-0540">Nuclease</keyword>
<keyword id="KW-1185">Reference proteome</keyword>
<organism>
    <name type="scientific">Rhodospirillum rubrum (strain ATCC 11170 / ATH 1.1.1 / DSM 467 / LMG 4362 / NCIMB 8255 / S1)</name>
    <dbReference type="NCBI Taxonomy" id="269796"/>
    <lineage>
        <taxon>Bacteria</taxon>
        <taxon>Pseudomonadati</taxon>
        <taxon>Pseudomonadota</taxon>
        <taxon>Alphaproteobacteria</taxon>
        <taxon>Rhodospirillales</taxon>
        <taxon>Rhodospirillaceae</taxon>
        <taxon>Rhodospirillum</taxon>
    </lineage>
</organism>
<name>CAS2B_RHORT</name>
<feature type="chain" id="PRO_0000417725" description="CRISPR-associated endoribonuclease Cas2 2">
    <location>
        <begin position="1"/>
        <end position="112"/>
    </location>
</feature>
<feature type="binding site" evidence="1">
    <location>
        <position position="15"/>
    </location>
    <ligand>
        <name>Mg(2+)</name>
        <dbReference type="ChEBI" id="CHEBI:18420"/>
        <note>catalytic</note>
    </ligand>
</feature>
<gene>
    <name evidence="1" type="primary">cas2-2</name>
    <name type="ordered locus">Rru_A0452</name>
</gene>
<evidence type="ECO:0000255" key="1">
    <source>
        <dbReference type="HAMAP-Rule" id="MF_01471"/>
    </source>
</evidence>
<accession>Q2RX88</accession>
<protein>
    <recommendedName>
        <fullName evidence="1">CRISPR-associated endoribonuclease Cas2 2</fullName>
        <ecNumber evidence="1">3.1.-.-</ecNumber>
    </recommendedName>
</protein>
<comment type="function">
    <text evidence="1">CRISPR (clustered regularly interspaced short palindromic repeat), is an adaptive immune system that provides protection against mobile genetic elements (viruses, transposable elements and conjugative plasmids). CRISPR clusters contain sequences complementary to antecedent mobile elements and target invading nucleic acids. CRISPR clusters are transcribed and processed into CRISPR RNA (crRNA). Functions as a ssRNA-specific endoribonuclease. Involved in the integration of spacer DNA into the CRISPR cassette.</text>
</comment>
<comment type="cofactor">
    <cofactor evidence="1">
        <name>Mg(2+)</name>
        <dbReference type="ChEBI" id="CHEBI:18420"/>
    </cofactor>
</comment>
<comment type="subunit">
    <text evidence="1">Homodimer, forms a heterotetramer with a Cas1 homodimer.</text>
</comment>
<comment type="similarity">
    <text evidence="1">Belongs to the CRISPR-associated endoribonuclease Cas2 protein family.</text>
</comment>
<proteinExistence type="inferred from homology"/>
<dbReference type="EC" id="3.1.-.-" evidence="1"/>
<dbReference type="EMBL" id="CP000230">
    <property type="protein sequence ID" value="ABC21257.1"/>
    <property type="molecule type" value="Genomic_DNA"/>
</dbReference>
<dbReference type="RefSeq" id="YP_425544.1">
    <property type="nucleotide sequence ID" value="NC_007643.1"/>
</dbReference>
<dbReference type="SMR" id="Q2RX88"/>
<dbReference type="STRING" id="269796.Rru_A0452"/>
<dbReference type="DNASU" id="3833786"/>
<dbReference type="EnsemblBacteria" id="ABC21257">
    <property type="protein sequence ID" value="ABC21257"/>
    <property type="gene ID" value="Rru_A0452"/>
</dbReference>
<dbReference type="KEGG" id="rru:Rru_A0452"/>
<dbReference type="PATRIC" id="fig|269796.9.peg.508"/>
<dbReference type="eggNOG" id="COG3512">
    <property type="taxonomic scope" value="Bacteria"/>
</dbReference>
<dbReference type="HOGENOM" id="CLU_150500_0_0_5"/>
<dbReference type="Proteomes" id="UP000001929">
    <property type="component" value="Chromosome"/>
</dbReference>
<dbReference type="GO" id="GO:0046872">
    <property type="term" value="F:metal ion binding"/>
    <property type="evidence" value="ECO:0007669"/>
    <property type="project" value="UniProtKB-UniRule"/>
</dbReference>
<dbReference type="GO" id="GO:0004521">
    <property type="term" value="F:RNA endonuclease activity"/>
    <property type="evidence" value="ECO:0007669"/>
    <property type="project" value="InterPro"/>
</dbReference>
<dbReference type="GO" id="GO:0051607">
    <property type="term" value="P:defense response to virus"/>
    <property type="evidence" value="ECO:0007669"/>
    <property type="project" value="UniProtKB-UniRule"/>
</dbReference>
<dbReference type="GO" id="GO:0043571">
    <property type="term" value="P:maintenance of CRISPR repeat elements"/>
    <property type="evidence" value="ECO:0007669"/>
    <property type="project" value="UniProtKB-UniRule"/>
</dbReference>
<dbReference type="HAMAP" id="MF_01471">
    <property type="entry name" value="Cas2"/>
    <property type="match status" value="1"/>
</dbReference>
<dbReference type="InterPro" id="IPR021127">
    <property type="entry name" value="CRISPR_associated_Cas2"/>
</dbReference>
<dbReference type="InterPro" id="IPR019199">
    <property type="entry name" value="Virulence_VapD/CRISPR_Cas2"/>
</dbReference>
<dbReference type="NCBIfam" id="TIGR01573">
    <property type="entry name" value="cas2"/>
    <property type="match status" value="1"/>
</dbReference>
<dbReference type="Pfam" id="PF09827">
    <property type="entry name" value="CRISPR_Cas2"/>
    <property type="match status" value="1"/>
</dbReference>
<dbReference type="SUPFAM" id="SSF143430">
    <property type="entry name" value="TTP0101/SSO1404-like"/>
    <property type="match status" value="1"/>
</dbReference>
<reference key="1">
    <citation type="journal article" date="2011" name="Stand. Genomic Sci.">
        <title>Complete genome sequence of Rhodospirillum rubrum type strain (S1).</title>
        <authorList>
            <person name="Munk A.C."/>
            <person name="Copeland A."/>
            <person name="Lucas S."/>
            <person name="Lapidus A."/>
            <person name="Del Rio T.G."/>
            <person name="Barry K."/>
            <person name="Detter J.C."/>
            <person name="Hammon N."/>
            <person name="Israni S."/>
            <person name="Pitluck S."/>
            <person name="Brettin T."/>
            <person name="Bruce D."/>
            <person name="Han C."/>
            <person name="Tapia R."/>
            <person name="Gilna P."/>
            <person name="Schmutz J."/>
            <person name="Larimer F."/>
            <person name="Land M."/>
            <person name="Kyrpides N.C."/>
            <person name="Mavromatis K."/>
            <person name="Richardson P."/>
            <person name="Rohde M."/>
            <person name="Goeker M."/>
            <person name="Klenk H.P."/>
            <person name="Zhang Y."/>
            <person name="Roberts G.P."/>
            <person name="Reslewic S."/>
            <person name="Schwartz D.C."/>
        </authorList>
    </citation>
    <scope>NUCLEOTIDE SEQUENCE [LARGE SCALE GENOMIC DNA]</scope>
    <source>
        <strain>ATCC 11170 / ATH 1.1.1 / DSM 467 / LMG 4362 / NCIMB 8255 / S1</strain>
    </source>
</reference>